<protein>
    <recommendedName>
        <fullName evidence="1">ATP synthase subunit delta</fullName>
    </recommendedName>
    <alternativeName>
        <fullName evidence="1">ATP synthase F(1) sector subunit delta</fullName>
    </alternativeName>
    <alternativeName>
        <fullName evidence="1">F-type ATPase subunit delta</fullName>
        <shortName evidence="1">F-ATPase subunit delta</shortName>
    </alternativeName>
</protein>
<gene>
    <name evidence="1" type="primary">atpH</name>
    <name type="ordered locus">Bphy_3030</name>
</gene>
<feature type="chain" id="PRO_1000184667" description="ATP synthase subunit delta">
    <location>
        <begin position="1"/>
        <end position="179"/>
    </location>
</feature>
<name>ATPD_PARP8</name>
<keyword id="KW-0066">ATP synthesis</keyword>
<keyword id="KW-0997">Cell inner membrane</keyword>
<keyword id="KW-1003">Cell membrane</keyword>
<keyword id="KW-0139">CF(1)</keyword>
<keyword id="KW-0375">Hydrogen ion transport</keyword>
<keyword id="KW-0406">Ion transport</keyword>
<keyword id="KW-0472">Membrane</keyword>
<keyword id="KW-1185">Reference proteome</keyword>
<keyword id="KW-0813">Transport</keyword>
<accession>B2JJK2</accession>
<evidence type="ECO:0000255" key="1">
    <source>
        <dbReference type="HAMAP-Rule" id="MF_01416"/>
    </source>
</evidence>
<organism>
    <name type="scientific">Paraburkholderia phymatum (strain DSM 17167 / CIP 108236 / LMG 21445 / STM815)</name>
    <name type="common">Burkholderia phymatum</name>
    <dbReference type="NCBI Taxonomy" id="391038"/>
    <lineage>
        <taxon>Bacteria</taxon>
        <taxon>Pseudomonadati</taxon>
        <taxon>Pseudomonadota</taxon>
        <taxon>Betaproteobacteria</taxon>
        <taxon>Burkholderiales</taxon>
        <taxon>Burkholderiaceae</taxon>
        <taxon>Paraburkholderia</taxon>
    </lineage>
</organism>
<comment type="function">
    <text evidence="1">F(1)F(0) ATP synthase produces ATP from ADP in the presence of a proton or sodium gradient. F-type ATPases consist of two structural domains, F(1) containing the extramembraneous catalytic core and F(0) containing the membrane proton channel, linked together by a central stalk and a peripheral stalk. During catalysis, ATP synthesis in the catalytic domain of F(1) is coupled via a rotary mechanism of the central stalk subunits to proton translocation.</text>
</comment>
<comment type="function">
    <text evidence="1">This protein is part of the stalk that links CF(0) to CF(1). It either transmits conformational changes from CF(0) to CF(1) or is implicated in proton conduction.</text>
</comment>
<comment type="subunit">
    <text evidence="1">F-type ATPases have 2 components, F(1) - the catalytic core - and F(0) - the membrane proton channel. F(1) has five subunits: alpha(3), beta(3), gamma(1), delta(1), epsilon(1). F(0) has three main subunits: a(1), b(2) and c(10-14). The alpha and beta chains form an alternating ring which encloses part of the gamma chain. F(1) is attached to F(0) by a central stalk formed by the gamma and epsilon chains, while a peripheral stalk is formed by the delta and b chains.</text>
</comment>
<comment type="subcellular location">
    <subcellularLocation>
        <location evidence="1">Cell inner membrane</location>
        <topology evidence="1">Peripheral membrane protein</topology>
    </subcellularLocation>
</comment>
<comment type="similarity">
    <text evidence="1">Belongs to the ATPase delta chain family.</text>
</comment>
<sequence length="179" mass="19038">MAELATIARPYAEALFGVAEAGDIAAWSTLVQELAQVARLPDVLSIASSPKVSRAQISDLLLAAVKSPLKDNAQAKNLVQMLVDNHRLPLLPEIATQFEELKNAREGAADALIVSAFPLEGAQLDGLVASLERKFKRKLKPTVQVDSSLIGGVRVTVGDEVLDTSVRARLASMQTALTA</sequence>
<dbReference type="EMBL" id="CP001043">
    <property type="protein sequence ID" value="ACC72200.1"/>
    <property type="molecule type" value="Genomic_DNA"/>
</dbReference>
<dbReference type="RefSeq" id="WP_012402378.1">
    <property type="nucleotide sequence ID" value="NC_010622.1"/>
</dbReference>
<dbReference type="SMR" id="B2JJK2"/>
<dbReference type="STRING" id="391038.Bphy_3030"/>
<dbReference type="KEGG" id="bph:Bphy_3030"/>
<dbReference type="eggNOG" id="COG0712">
    <property type="taxonomic scope" value="Bacteria"/>
</dbReference>
<dbReference type="HOGENOM" id="CLU_085114_3_0_4"/>
<dbReference type="OrthoDB" id="9816221at2"/>
<dbReference type="Proteomes" id="UP000001192">
    <property type="component" value="Chromosome 1"/>
</dbReference>
<dbReference type="GO" id="GO:0005886">
    <property type="term" value="C:plasma membrane"/>
    <property type="evidence" value="ECO:0007669"/>
    <property type="project" value="UniProtKB-SubCell"/>
</dbReference>
<dbReference type="GO" id="GO:0045259">
    <property type="term" value="C:proton-transporting ATP synthase complex"/>
    <property type="evidence" value="ECO:0007669"/>
    <property type="project" value="UniProtKB-KW"/>
</dbReference>
<dbReference type="GO" id="GO:0046933">
    <property type="term" value="F:proton-transporting ATP synthase activity, rotational mechanism"/>
    <property type="evidence" value="ECO:0007669"/>
    <property type="project" value="UniProtKB-UniRule"/>
</dbReference>
<dbReference type="Gene3D" id="1.10.520.20">
    <property type="entry name" value="N-terminal domain of the delta subunit of the F1F0-ATP synthase"/>
    <property type="match status" value="1"/>
</dbReference>
<dbReference type="HAMAP" id="MF_01416">
    <property type="entry name" value="ATP_synth_delta_bact"/>
    <property type="match status" value="1"/>
</dbReference>
<dbReference type="InterPro" id="IPR026015">
    <property type="entry name" value="ATP_synth_OSCP/delta_N_sf"/>
</dbReference>
<dbReference type="InterPro" id="IPR000711">
    <property type="entry name" value="ATPase_OSCP/dsu"/>
</dbReference>
<dbReference type="NCBIfam" id="TIGR01145">
    <property type="entry name" value="ATP_synt_delta"/>
    <property type="match status" value="1"/>
</dbReference>
<dbReference type="NCBIfam" id="NF004402">
    <property type="entry name" value="PRK05758.2-2"/>
    <property type="match status" value="1"/>
</dbReference>
<dbReference type="PANTHER" id="PTHR11910">
    <property type="entry name" value="ATP SYNTHASE DELTA CHAIN"/>
    <property type="match status" value="1"/>
</dbReference>
<dbReference type="Pfam" id="PF00213">
    <property type="entry name" value="OSCP"/>
    <property type="match status" value="1"/>
</dbReference>
<dbReference type="PRINTS" id="PR00125">
    <property type="entry name" value="ATPASEDELTA"/>
</dbReference>
<dbReference type="SUPFAM" id="SSF47928">
    <property type="entry name" value="N-terminal domain of the delta subunit of the F1F0-ATP synthase"/>
    <property type="match status" value="1"/>
</dbReference>
<reference key="1">
    <citation type="journal article" date="2014" name="Stand. Genomic Sci.">
        <title>Complete genome sequence of Burkholderia phymatum STM815(T), a broad host range and efficient nitrogen-fixing symbiont of Mimosa species.</title>
        <authorList>
            <person name="Moulin L."/>
            <person name="Klonowska A."/>
            <person name="Caroline B."/>
            <person name="Booth K."/>
            <person name="Vriezen J.A."/>
            <person name="Melkonian R."/>
            <person name="James E.K."/>
            <person name="Young J.P."/>
            <person name="Bena G."/>
            <person name="Hauser L."/>
            <person name="Land M."/>
            <person name="Kyrpides N."/>
            <person name="Bruce D."/>
            <person name="Chain P."/>
            <person name="Copeland A."/>
            <person name="Pitluck S."/>
            <person name="Woyke T."/>
            <person name="Lizotte-Waniewski M."/>
            <person name="Bristow J."/>
            <person name="Riley M."/>
        </authorList>
    </citation>
    <scope>NUCLEOTIDE SEQUENCE [LARGE SCALE GENOMIC DNA]</scope>
    <source>
        <strain>DSM 17167 / CIP 108236 / LMG 21445 / STM815</strain>
    </source>
</reference>
<proteinExistence type="inferred from homology"/>